<proteinExistence type="inferred from homology"/>
<feature type="chain" id="PRO_0000373182" description="Protein MGF 100-3L">
    <location>
        <begin position="1"/>
        <end position="146"/>
    </location>
</feature>
<gene>
    <name type="ordered locus">Pret-164</name>
</gene>
<accession>P0C9G0</accession>
<comment type="function">
    <text evidence="1">Plays a role in virus cell tropism, and may be required for efficient virus replication in macrophages.</text>
</comment>
<comment type="induction">
    <text evidence="2">Expressed in the early phase of the viral replicative cycle.</text>
</comment>
<comment type="similarity">
    <text evidence="2">Belongs to the asfivirus MGF 100 family.</text>
</comment>
<name>1003L_ASFP4</name>
<dbReference type="EMBL" id="AY261363">
    <property type="status" value="NOT_ANNOTATED_CDS"/>
    <property type="molecule type" value="Genomic_DNA"/>
</dbReference>
<dbReference type="SMR" id="P0C9G0"/>
<dbReference type="Proteomes" id="UP000000859">
    <property type="component" value="Segment"/>
</dbReference>
<sequence length="146" mass="17250">MGNRLNGSYLSNTDMSIEDEQNKYNEAIEDCKICNKVYIKQSGKIDKKELNRIKKLDFFYSQKTDYEIERMFFNVPNGTFLLTDDATNENLFIAQKDLENGSLNIAKLEFKGKALYIDGKDYFSLENYLKTFEDFYKYPLIYNKNE</sequence>
<keyword id="KW-0244">Early protein</keyword>
<reference key="1">
    <citation type="submission" date="2003-03" db="EMBL/GenBank/DDBJ databases">
        <title>African swine fever virus genomes.</title>
        <authorList>
            <person name="Kutish G.F."/>
            <person name="Rock D.L."/>
        </authorList>
    </citation>
    <scope>NUCLEOTIDE SEQUENCE [LARGE SCALE GENOMIC DNA]</scope>
</reference>
<organismHost>
    <name type="scientific">Ornithodoros</name>
    <name type="common">relapsing fever ticks</name>
    <dbReference type="NCBI Taxonomy" id="6937"/>
</organismHost>
<organismHost>
    <name type="scientific">Phacochoerus aethiopicus</name>
    <name type="common">Warthog</name>
    <dbReference type="NCBI Taxonomy" id="85517"/>
</organismHost>
<organismHost>
    <name type="scientific">Phacochoerus africanus</name>
    <name type="common">Warthog</name>
    <dbReference type="NCBI Taxonomy" id="41426"/>
</organismHost>
<organismHost>
    <name type="scientific">Potamochoerus larvatus</name>
    <name type="common">Bushpig</name>
    <dbReference type="NCBI Taxonomy" id="273792"/>
</organismHost>
<organismHost>
    <name type="scientific">Sus scrofa</name>
    <name type="common">Pig</name>
    <dbReference type="NCBI Taxonomy" id="9823"/>
</organismHost>
<organism>
    <name type="scientific">African swine fever virus (isolate Tick/South Africa/Pretoriuskop Pr4/1996)</name>
    <name type="common">ASFV</name>
    <dbReference type="NCBI Taxonomy" id="561443"/>
    <lineage>
        <taxon>Viruses</taxon>
        <taxon>Varidnaviria</taxon>
        <taxon>Bamfordvirae</taxon>
        <taxon>Nucleocytoviricota</taxon>
        <taxon>Pokkesviricetes</taxon>
        <taxon>Asfuvirales</taxon>
        <taxon>Asfarviridae</taxon>
        <taxon>Asfivirus</taxon>
        <taxon>African swine fever virus</taxon>
    </lineage>
</organism>
<protein>
    <recommendedName>
        <fullName>Protein MGF 100-3L</fullName>
    </recommendedName>
</protein>
<evidence type="ECO:0000250" key="1"/>
<evidence type="ECO:0000305" key="2"/>